<gene>
    <name evidence="8" type="primary">ltmP</name>
</gene>
<comment type="function">
    <text evidence="4 5 7">Cytochrome P450 monooxygenase; part of the gene clusters that mediates the biosynthesis of lolitrems, indole-diterpene mycotoxins that are potent tremorgens in mammals, and are synthesized by clavicipitaceous fungal endophytes in association with their grass hosts (PubMed:16765617, PubMed:22750140). The geranylgeranyl diphosphate (GGPP) synthase ltmG is proposed to catalyze the first step in lolitrem biosynthesis (PubMed:15991026, PubMed:16765617). LtmG catalyzes a series of iterative condensations of isopentenyl diphosphate (IPP) with dimethylallyl diphosphate (DMAPP), geranyl diphosphate (GPP), and farnesyl diphosphate (FPP), to form GGPP (PubMed:15991026, PubMed:16765617). GGPP then condenses with indole-3-glycerol phosphate to form 3-geranylgeranylindole, an acyclic intermediate, to be incorporated into paxilline (PubMed:16765617). Either ltmG or ltmC could be responsible for this step, as both are putative prenyl transferases (PubMed:16765617). The FAD-dependent monooxygenase ltmM then catalyzes the epoxidation of the two terminal alkenes of the geranylgeranyl moiety, which is subsequently cyclized by ltmB, to paspaline (PubMed:15991026, PubMed:16765617). The cytochrome P450 monooxygenases ltmQ and ltmP can sequentially oxidize paspaline to terpendole E and terpendole F (PubMed:22750140). Alternatively, ltmP converts paspaline to an intermediate which is oxidized by ltmQ to terpendole F (PubMed:22750140). LtmF, ltmK, ltmE and ltmJ appear to be unique to the epichloe endophytes (PubMed:15991026, PubMed:16765617). The prenyltransferase ltmF is involved in the 27-hydroxyl-O-prenylation (PubMed:22750140). The cytochrome P450 monooxygenase ltmK is required for the oxidative acetal ring formation (PubMed:22750140). The multi-functional prenyltransferase ltmE is required for C20- and C21-prenylations of the indole ring of paspalanes and acts together with the cytochrome P450 monooxygenase ltmJ to yield lolitremanes by multiple oxidations and ring closures (PubMed:22750140). The stereoisomer pairs of lolitriol and lolitrem N or lolitrem B and lolitrem F may be attributed to variations in the way in which ring closure can occur under the action of ltmJ (PubMed:22750140). While the major product of this pathway is lolitrem B, the prenyl transferases and cytochrome P450 monooxygenases identified in this pathway have a remarkable versatility in their regio- and stereo-specificities to generate a diverse range of metabolites that are products of a metabolic grid rather than a linear pathway (PubMed:22750140).</text>
</comment>
<comment type="cofactor">
    <cofactor evidence="1">
        <name>heme</name>
        <dbReference type="ChEBI" id="CHEBI:30413"/>
    </cofactor>
</comment>
<comment type="pathway">
    <text evidence="7">Secondary metabolite biosynthesis.</text>
</comment>
<comment type="induction">
    <text evidence="6">Expression is down-regulated when the stress-activated mitogen-activated protein kinase (sakA) is deleted (PubMed:20519633).</text>
</comment>
<comment type="similarity">
    <text evidence="9">Belongs to the cytochrome P450 family.</text>
</comment>
<organism>
    <name type="scientific">Epichloe festucae var. lolii</name>
    <name type="common">Neotyphodium lolii</name>
    <name type="synonym">Acremonium lolii</name>
    <dbReference type="NCBI Taxonomy" id="73839"/>
    <lineage>
        <taxon>Eukaryota</taxon>
        <taxon>Fungi</taxon>
        <taxon>Dikarya</taxon>
        <taxon>Ascomycota</taxon>
        <taxon>Pezizomycotina</taxon>
        <taxon>Sordariomycetes</taxon>
        <taxon>Hypocreomycetidae</taxon>
        <taxon>Hypocreales</taxon>
        <taxon>Clavicipitaceae</taxon>
        <taxon>Epichloe</taxon>
    </lineage>
</organism>
<protein>
    <recommendedName>
        <fullName evidence="8">Cytochrome P450 monooxygenase ltmP</fullName>
        <ecNumber evidence="10">1.-.-.-</ecNumber>
    </recommendedName>
    <alternativeName>
        <fullName evidence="8">Lolitrem B biosynthesis cluster 2 protein P</fullName>
    </alternativeName>
</protein>
<reference key="1">
    <citation type="journal article" date="2006" name="Fungal Genet. Biol.">
        <title>A complex gene cluster for indole-diterpene biosynthesis in the grass endophyte Neotyphodium lolii.</title>
        <authorList>
            <person name="Young C.A."/>
            <person name="Felitti S."/>
            <person name="Shields K."/>
            <person name="Spangenberg G."/>
            <person name="Johnson R.D."/>
            <person name="Bryan G.T."/>
            <person name="Saikia S."/>
            <person name="Scott B."/>
        </authorList>
    </citation>
    <scope>NUCLEOTIDE SEQUENCE [GENOMIC DNA]</scope>
    <source>
        <strain>Lp19</strain>
    </source>
</reference>
<reference key="2">
    <citation type="journal article" date="2005" name="Mol. Genet. Genomics">
        <title>Molecular cloning and genetic analysis of a symbiosis-expressed gene cluster for lolitrem biosynthesis from a mutualistic endophyte of perennial ryegrass.</title>
        <authorList>
            <person name="Young C.A."/>
            <person name="Bryant M.K."/>
            <person name="Christensen M.J."/>
            <person name="Tapper B.A."/>
            <person name="Bryan G.T."/>
            <person name="Scott B."/>
        </authorList>
    </citation>
    <scope>FUNCTION</scope>
    <source>
        <strain>Lp19</strain>
    </source>
</reference>
<reference key="3">
    <citation type="journal article" date="2010" name="Plant Physiol.">
        <title>Disruption of signaling in a fungal-grass symbiosis leads to pathogenesis.</title>
        <authorList>
            <person name="Eaton C.J."/>
            <person name="Cox M.P."/>
            <person name="Ambrose B."/>
            <person name="Becker M."/>
            <person name="Hesse U."/>
            <person name="Schardl C.L."/>
            <person name="Scott B."/>
        </authorList>
    </citation>
    <scope>INDUCTION</scope>
</reference>
<reference key="4">
    <citation type="journal article" date="2012" name="FEBS Lett.">
        <title>Functional analysis of an indole-diterpene gene cluster for lolitrem B biosynthesis in the grass endosymbiont Epichloe festucae.</title>
        <authorList>
            <person name="Saikia S."/>
            <person name="Takemoto D."/>
            <person name="Tapper B.A."/>
            <person name="Lane G.A."/>
            <person name="Fraser K."/>
            <person name="Scott B."/>
        </authorList>
    </citation>
    <scope>FUNCTION</scope>
    <scope>PATHWAY</scope>
</reference>
<keyword id="KW-0325">Glycoprotein</keyword>
<keyword id="KW-0349">Heme</keyword>
<keyword id="KW-0408">Iron</keyword>
<keyword id="KW-0479">Metal-binding</keyword>
<keyword id="KW-0503">Monooxygenase</keyword>
<keyword id="KW-0560">Oxidoreductase</keyword>
<keyword id="KW-0732">Signal</keyword>
<dbReference type="EC" id="1.-.-.-" evidence="10"/>
<dbReference type="EMBL" id="DQ443465">
    <property type="protein sequence ID" value="ABF20222.1"/>
    <property type="molecule type" value="Genomic_DNA"/>
</dbReference>
<dbReference type="SMR" id="Q15FB5"/>
<dbReference type="GlyCosmos" id="Q15FB5">
    <property type="glycosylation" value="1 site, No reported glycans"/>
</dbReference>
<dbReference type="GO" id="GO:0020037">
    <property type="term" value="F:heme binding"/>
    <property type="evidence" value="ECO:0007669"/>
    <property type="project" value="InterPro"/>
</dbReference>
<dbReference type="GO" id="GO:0005506">
    <property type="term" value="F:iron ion binding"/>
    <property type="evidence" value="ECO:0007669"/>
    <property type="project" value="InterPro"/>
</dbReference>
<dbReference type="GO" id="GO:0004497">
    <property type="term" value="F:monooxygenase activity"/>
    <property type="evidence" value="ECO:0007669"/>
    <property type="project" value="UniProtKB-KW"/>
</dbReference>
<dbReference type="GO" id="GO:0016705">
    <property type="term" value="F:oxidoreductase activity, acting on paired donors, with incorporation or reduction of molecular oxygen"/>
    <property type="evidence" value="ECO:0007669"/>
    <property type="project" value="InterPro"/>
</dbReference>
<dbReference type="GO" id="GO:0019748">
    <property type="term" value="P:secondary metabolic process"/>
    <property type="evidence" value="ECO:0007669"/>
    <property type="project" value="UniProtKB-ARBA"/>
</dbReference>
<dbReference type="CDD" id="cd11041">
    <property type="entry name" value="CYP503A1-like"/>
    <property type="match status" value="1"/>
</dbReference>
<dbReference type="Gene3D" id="1.10.630.10">
    <property type="entry name" value="Cytochrome P450"/>
    <property type="match status" value="1"/>
</dbReference>
<dbReference type="InterPro" id="IPR001128">
    <property type="entry name" value="Cyt_P450"/>
</dbReference>
<dbReference type="InterPro" id="IPR002403">
    <property type="entry name" value="Cyt_P450_E_grp-IV"/>
</dbReference>
<dbReference type="InterPro" id="IPR036396">
    <property type="entry name" value="Cyt_P450_sf"/>
</dbReference>
<dbReference type="PANTHER" id="PTHR46206">
    <property type="entry name" value="CYTOCHROME P450"/>
    <property type="match status" value="1"/>
</dbReference>
<dbReference type="PANTHER" id="PTHR46206:SF7">
    <property type="entry name" value="P450, PUTATIVE (EUROFUNG)-RELATED"/>
    <property type="match status" value="1"/>
</dbReference>
<dbReference type="Pfam" id="PF00067">
    <property type="entry name" value="p450"/>
    <property type="match status" value="1"/>
</dbReference>
<dbReference type="PRINTS" id="PR00465">
    <property type="entry name" value="EP450IV"/>
</dbReference>
<dbReference type="SUPFAM" id="SSF48264">
    <property type="entry name" value="Cytochrome P450"/>
    <property type="match status" value="1"/>
</dbReference>
<feature type="signal peptide" evidence="2">
    <location>
        <begin position="1"/>
        <end position="21"/>
    </location>
</feature>
<feature type="chain" id="PRO_0000444333" description="Cytochrome P450 monooxygenase ltmP" evidence="2">
    <location>
        <begin position="22"/>
        <end position="498"/>
    </location>
</feature>
<feature type="binding site" description="axial binding residue" evidence="1">
    <location>
        <position position="435"/>
    </location>
    <ligand>
        <name>heme</name>
        <dbReference type="ChEBI" id="CHEBI:30413"/>
    </ligand>
    <ligandPart>
        <name>Fe</name>
        <dbReference type="ChEBI" id="CHEBI:18248"/>
    </ligandPart>
</feature>
<feature type="glycosylation site" description="N-linked (GlcNAc...) asparagine" evidence="3">
    <location>
        <position position="420"/>
    </location>
</feature>
<sequence>MLMLHAVPVGICLLLWYVVYGTKRKECIPTIRRWPRLLPQFLDRLSYNDHAARLVKHGYEKHKNQPFRLLKMDMDLIVIPLQYALELRAVTSDKLDPLTASFDDNAGKVTRILLGSELHTRAIQQRLTPKLPQTLPVLLDELNHAFGQVLPAGNDGSNAWISVNPYELVLNLATRATARLFVGDLICRNEIFLETTASFSRNTFDTISTSRSFGNLFTHYFARWISTAKEAHGQLQYIQNLLGSEVQRRKLNSEEKHDDFLQWCTELAVTEDEARPEALAHRTLGILSMAVIHTTAMALTHILFDMISDDSLKESLRREQQNVLKHGWTEITQQTMLDMKQLDSLMRESQRINPVGEFTFRRIVRERITLSDGYQLQPGQQIAIPAKCINTDSTKLSDAHLFQPFRWLKQSGTATTSFSNSSALNLHFGFGRYACPGRFIASYMIKAIMSRILLEYDFKLDSEFPSRRPPNIVHGDKILPNRNAVVLLRRLEKTVTVC</sequence>
<evidence type="ECO:0000250" key="1">
    <source>
        <dbReference type="UniProtKB" id="P04798"/>
    </source>
</evidence>
<evidence type="ECO:0000255" key="2"/>
<evidence type="ECO:0000255" key="3">
    <source>
        <dbReference type="PROSITE-ProRule" id="PRU00498"/>
    </source>
</evidence>
<evidence type="ECO:0000269" key="4">
    <source>
    </source>
</evidence>
<evidence type="ECO:0000269" key="5">
    <source>
    </source>
</evidence>
<evidence type="ECO:0000269" key="6">
    <source>
    </source>
</evidence>
<evidence type="ECO:0000269" key="7">
    <source>
    </source>
</evidence>
<evidence type="ECO:0000303" key="8">
    <source>
    </source>
</evidence>
<evidence type="ECO:0000305" key="9"/>
<evidence type="ECO:0000305" key="10">
    <source>
    </source>
</evidence>
<proteinExistence type="evidence at transcript level"/>
<name>LTMP_EPIFI</name>
<accession>Q15FB5</accession>